<organism>
    <name type="scientific">Cavia porcellus</name>
    <name type="common">Guinea pig</name>
    <dbReference type="NCBI Taxonomy" id="10141"/>
    <lineage>
        <taxon>Eukaryota</taxon>
        <taxon>Metazoa</taxon>
        <taxon>Chordata</taxon>
        <taxon>Craniata</taxon>
        <taxon>Vertebrata</taxon>
        <taxon>Euteleostomi</taxon>
        <taxon>Mammalia</taxon>
        <taxon>Eutheria</taxon>
        <taxon>Euarchontoglires</taxon>
        <taxon>Glires</taxon>
        <taxon>Rodentia</taxon>
        <taxon>Hystricomorpha</taxon>
        <taxon>Caviidae</taxon>
        <taxon>Cavia</taxon>
    </lineage>
</organism>
<name>CCL5_CAVPO</name>
<accession>P97272</accession>
<accession>O09076</accession>
<feature type="signal peptide" evidence="3">
    <location>
        <begin position="1"/>
        <end position="23"/>
    </location>
</feature>
<feature type="chain" id="PRO_0000005172" description="C-C motif chemokine 5">
    <location>
        <begin position="24"/>
        <end position="91"/>
    </location>
</feature>
<feature type="disulfide bond" evidence="1">
    <location>
        <begin position="33"/>
        <end position="57"/>
    </location>
</feature>
<feature type="disulfide bond" evidence="1">
    <location>
        <begin position="34"/>
        <end position="73"/>
    </location>
</feature>
<comment type="function">
    <text evidence="2">Chemoattractant for blood monocytes, memory T-helper cells and eosinophils. Causes the release of histamine from basophils and activates eosinophils. May activate several chemokine receptors including CCR1, CCR3, CCR4 and CCR5. May also be an agonist of the G protein-coupled receptor GPR75. Together with GPR75, may play a role in neuron survival through activation of a downstream signaling pathway involving the PI3, Akt and MAP kinases. By activating GPR75 may also play a role in insulin secretion by islet cells.</text>
</comment>
<comment type="subcellular location">
    <subcellularLocation>
        <location>Secreted</location>
    </subcellularLocation>
</comment>
<comment type="similarity">
    <text evidence="4">Belongs to the intercrine beta (chemokine CC) family.</text>
</comment>
<evidence type="ECO:0000250" key="1"/>
<evidence type="ECO:0000250" key="2">
    <source>
        <dbReference type="UniProtKB" id="P13501"/>
    </source>
</evidence>
<evidence type="ECO:0000255" key="3"/>
<evidence type="ECO:0000305" key="4"/>
<protein>
    <recommendedName>
        <fullName>C-C motif chemokine 5</fullName>
    </recommendedName>
    <alternativeName>
        <fullName>SIS-delta</fullName>
    </alternativeName>
    <alternativeName>
        <fullName>Small-inducible cytokine A5</fullName>
    </alternativeName>
    <alternativeName>
        <fullName>T-cell-specific protein RANTES</fullName>
    </alternativeName>
</protein>
<reference key="1">
    <citation type="submission" date="1996-11" db="EMBL/GenBank/DDBJ databases">
        <authorList>
            <person name="Campbell E.M."/>
            <person name="Proudfoot A.E.I."/>
            <person name="Yoshimura T."/>
            <person name="Allet B."/>
            <person name="Wells T.N.C."/>
            <person name="White A.M."/>
            <person name="Westwick J."/>
            <person name="Watson M.L."/>
        </authorList>
    </citation>
    <scope>NUCLEOTIDE SEQUENCE [MRNA]</scope>
    <source>
        <strain>Dunkin-Hartley</strain>
    </source>
</reference>
<reference key="2">
    <citation type="submission" date="1997-04" db="EMBL/GenBank/DDBJ databases">
        <authorList>
            <person name="Asano K."/>
            <person name="Nakamura M."/>
            <person name="Oguma T."/>
            <person name="Fukunaga K."/>
            <person name="Ishizaka A."/>
            <person name="Yamaguchi K."/>
            <person name="Kanazawa M."/>
        </authorList>
    </citation>
    <scope>NUCLEOTIDE SEQUENCE [MRNA]</scope>
    <source>
        <tissue>Lung</tissue>
    </source>
</reference>
<sequence length="91" mass="10088">MKVSAAALCVILTTAALCVPASASPYASDTTPCCFAYISRALPRTHIKEYFYTSSKCSNLAVVFVTRKNRQVCANPEKKWVREYINSLEMS</sequence>
<dbReference type="EMBL" id="U77037">
    <property type="protein sequence ID" value="AAC53293.1"/>
    <property type="molecule type" value="mRNA"/>
</dbReference>
<dbReference type="EMBL" id="AB002662">
    <property type="protein sequence ID" value="BAA19604.1"/>
    <property type="molecule type" value="mRNA"/>
</dbReference>
<dbReference type="RefSeq" id="NP_001166398.1">
    <property type="nucleotide sequence ID" value="NM_001172927.1"/>
</dbReference>
<dbReference type="SMR" id="P97272"/>
<dbReference type="FunCoup" id="P97272">
    <property type="interactions" value="755"/>
</dbReference>
<dbReference type="STRING" id="10141.ENSCPOP00000007949"/>
<dbReference type="Ensembl" id="ENSCPOT00000008932.3">
    <property type="protein sequence ID" value="ENSCPOP00000007949.2"/>
    <property type="gene ID" value="ENSCPOG00000008852.4"/>
</dbReference>
<dbReference type="GeneID" id="100135495"/>
<dbReference type="KEGG" id="cpoc:100135495"/>
<dbReference type="CTD" id="6352"/>
<dbReference type="VEuPathDB" id="HostDB:ENSCPOG00000008852"/>
<dbReference type="eggNOG" id="ENOG502S8D1">
    <property type="taxonomic scope" value="Eukaryota"/>
</dbReference>
<dbReference type="GeneTree" id="ENSGT01100000263482"/>
<dbReference type="HOGENOM" id="CLU_141716_4_2_1"/>
<dbReference type="InParanoid" id="P97272"/>
<dbReference type="OMA" id="HIQEYFY"/>
<dbReference type="OrthoDB" id="8900217at2759"/>
<dbReference type="TreeFam" id="TF334888"/>
<dbReference type="Proteomes" id="UP000005447">
    <property type="component" value="Unassembled WGS sequence"/>
</dbReference>
<dbReference type="Bgee" id="ENSCPOG00000008852">
    <property type="expression patterns" value="Expressed in liver and 10 other cell types or tissues"/>
</dbReference>
<dbReference type="GO" id="GO:0005737">
    <property type="term" value="C:cytoplasm"/>
    <property type="evidence" value="ECO:0007669"/>
    <property type="project" value="Ensembl"/>
</dbReference>
<dbReference type="GO" id="GO:0005615">
    <property type="term" value="C:extracellular space"/>
    <property type="evidence" value="ECO:0007669"/>
    <property type="project" value="UniProtKB-KW"/>
</dbReference>
<dbReference type="GO" id="GO:0031726">
    <property type="term" value="F:CCR1 chemokine receptor binding"/>
    <property type="evidence" value="ECO:0007669"/>
    <property type="project" value="Ensembl"/>
</dbReference>
<dbReference type="GO" id="GO:0031730">
    <property type="term" value="F:CCR5 chemokine receptor binding"/>
    <property type="evidence" value="ECO:0007669"/>
    <property type="project" value="Ensembl"/>
</dbReference>
<dbReference type="GO" id="GO:0042056">
    <property type="term" value="F:chemoattractant activity"/>
    <property type="evidence" value="ECO:0007669"/>
    <property type="project" value="Ensembl"/>
</dbReference>
<dbReference type="GO" id="GO:0008009">
    <property type="term" value="F:chemokine activity"/>
    <property type="evidence" value="ECO:0007669"/>
    <property type="project" value="Ensembl"/>
</dbReference>
<dbReference type="GO" id="GO:0046817">
    <property type="term" value="F:chemokine receptor antagonist activity"/>
    <property type="evidence" value="ECO:0007669"/>
    <property type="project" value="Ensembl"/>
</dbReference>
<dbReference type="GO" id="GO:0004435">
    <property type="term" value="F:phosphatidylinositol-4,5-bisphosphate phospholipase C activity"/>
    <property type="evidence" value="ECO:0007669"/>
    <property type="project" value="Ensembl"/>
</dbReference>
<dbReference type="GO" id="GO:0016004">
    <property type="term" value="F:phospholipase activator activity"/>
    <property type="evidence" value="ECO:0007669"/>
    <property type="project" value="Ensembl"/>
</dbReference>
<dbReference type="GO" id="GO:0042803">
    <property type="term" value="F:protein homodimerization activity"/>
    <property type="evidence" value="ECO:0007669"/>
    <property type="project" value="Ensembl"/>
</dbReference>
<dbReference type="GO" id="GO:0004672">
    <property type="term" value="F:protein kinase activity"/>
    <property type="evidence" value="ECO:0007669"/>
    <property type="project" value="Ensembl"/>
</dbReference>
<dbReference type="GO" id="GO:0030298">
    <property type="term" value="F:receptor signaling protein tyrosine kinase activator activity"/>
    <property type="evidence" value="ECO:0007669"/>
    <property type="project" value="Ensembl"/>
</dbReference>
<dbReference type="GO" id="GO:0061844">
    <property type="term" value="P:antimicrobial humoral immune response mediated by antimicrobial peptide"/>
    <property type="evidence" value="ECO:0007669"/>
    <property type="project" value="TreeGrafter"/>
</dbReference>
<dbReference type="GO" id="GO:0006816">
    <property type="term" value="P:calcium ion transport"/>
    <property type="evidence" value="ECO:0007669"/>
    <property type="project" value="Ensembl"/>
</dbReference>
<dbReference type="GO" id="GO:0007267">
    <property type="term" value="P:cell-cell signaling"/>
    <property type="evidence" value="ECO:0007669"/>
    <property type="project" value="Ensembl"/>
</dbReference>
<dbReference type="GO" id="GO:0044344">
    <property type="term" value="P:cellular response to fibroblast growth factor stimulus"/>
    <property type="evidence" value="ECO:0007669"/>
    <property type="project" value="Ensembl"/>
</dbReference>
<dbReference type="GO" id="GO:0071347">
    <property type="term" value="P:cellular response to interleukin-1"/>
    <property type="evidence" value="ECO:0007669"/>
    <property type="project" value="Ensembl"/>
</dbReference>
<dbReference type="GO" id="GO:0071356">
    <property type="term" value="P:cellular response to tumor necrosis factor"/>
    <property type="evidence" value="ECO:0007669"/>
    <property type="project" value="Ensembl"/>
</dbReference>
<dbReference type="GO" id="GO:0071346">
    <property type="term" value="P:cellular response to type II interferon"/>
    <property type="evidence" value="ECO:0007669"/>
    <property type="project" value="Ensembl"/>
</dbReference>
<dbReference type="GO" id="GO:0098586">
    <property type="term" value="P:cellular response to virus"/>
    <property type="evidence" value="ECO:0007669"/>
    <property type="project" value="Ensembl"/>
</dbReference>
<dbReference type="GO" id="GO:0035689">
    <property type="term" value="P:chemokine (C-C motif) ligand 5 signaling pathway"/>
    <property type="evidence" value="ECO:0007669"/>
    <property type="project" value="Ensembl"/>
</dbReference>
<dbReference type="GO" id="GO:0070098">
    <property type="term" value="P:chemokine-mediated signaling pathway"/>
    <property type="evidence" value="ECO:0000250"/>
    <property type="project" value="UniProtKB"/>
</dbReference>
<dbReference type="GO" id="GO:0048245">
    <property type="term" value="P:eosinophil chemotaxis"/>
    <property type="evidence" value="ECO:0007669"/>
    <property type="project" value="Ensembl"/>
</dbReference>
<dbReference type="GO" id="GO:0050673">
    <property type="term" value="P:epithelial cell proliferation"/>
    <property type="evidence" value="ECO:0007669"/>
    <property type="project" value="Ensembl"/>
</dbReference>
<dbReference type="GO" id="GO:0006887">
    <property type="term" value="P:exocytosis"/>
    <property type="evidence" value="ECO:0007669"/>
    <property type="project" value="Ensembl"/>
</dbReference>
<dbReference type="GO" id="GO:0007186">
    <property type="term" value="P:G protein-coupled receptor signaling pathway"/>
    <property type="evidence" value="ECO:0000250"/>
    <property type="project" value="UniProtKB"/>
</dbReference>
<dbReference type="GO" id="GO:0006954">
    <property type="term" value="P:inflammatory response"/>
    <property type="evidence" value="ECO:0007669"/>
    <property type="project" value="UniProtKB-KW"/>
</dbReference>
<dbReference type="GO" id="GO:0006874">
    <property type="term" value="P:intracellular calcium ion homeostasis"/>
    <property type="evidence" value="ECO:0007669"/>
    <property type="project" value="Ensembl"/>
</dbReference>
<dbReference type="GO" id="GO:0007159">
    <property type="term" value="P:leukocyte cell-cell adhesion"/>
    <property type="evidence" value="ECO:0007669"/>
    <property type="project" value="Ensembl"/>
</dbReference>
<dbReference type="GO" id="GO:0043922">
    <property type="term" value="P:negative regulation by host of viral transcription"/>
    <property type="evidence" value="ECO:0007669"/>
    <property type="project" value="Ensembl"/>
</dbReference>
<dbReference type="GO" id="GO:2000110">
    <property type="term" value="P:negative regulation of macrophage apoptotic process"/>
    <property type="evidence" value="ECO:0007669"/>
    <property type="project" value="Ensembl"/>
</dbReference>
<dbReference type="GO" id="GO:0070233">
    <property type="term" value="P:negative regulation of T cell apoptotic process"/>
    <property type="evidence" value="ECO:0007669"/>
    <property type="project" value="Ensembl"/>
</dbReference>
<dbReference type="GO" id="GO:0045071">
    <property type="term" value="P:negative regulation of viral genome replication"/>
    <property type="evidence" value="ECO:0007669"/>
    <property type="project" value="Ensembl"/>
</dbReference>
<dbReference type="GO" id="GO:0042119">
    <property type="term" value="P:neutrophil activation"/>
    <property type="evidence" value="ECO:0007669"/>
    <property type="project" value="Ensembl"/>
</dbReference>
<dbReference type="GO" id="GO:0031583">
    <property type="term" value="P:phospholipase D-activating G protein-coupled receptor signaling pathway"/>
    <property type="evidence" value="ECO:0007669"/>
    <property type="project" value="Ensembl"/>
</dbReference>
<dbReference type="GO" id="GO:0051928">
    <property type="term" value="P:positive regulation of calcium ion transport"/>
    <property type="evidence" value="ECO:0007669"/>
    <property type="project" value="Ensembl"/>
</dbReference>
<dbReference type="GO" id="GO:0033634">
    <property type="term" value="P:positive regulation of cell-cell adhesion mediated by integrin"/>
    <property type="evidence" value="ECO:0007669"/>
    <property type="project" value="Ensembl"/>
</dbReference>
<dbReference type="GO" id="GO:0050679">
    <property type="term" value="P:positive regulation of epithelial cell proliferation"/>
    <property type="evidence" value="ECO:0007669"/>
    <property type="project" value="Ensembl"/>
</dbReference>
<dbReference type="GO" id="GO:0045745">
    <property type="term" value="P:positive regulation of G protein-coupled receptor signaling pathway"/>
    <property type="evidence" value="ECO:0007669"/>
    <property type="project" value="Ensembl"/>
</dbReference>
<dbReference type="GO" id="GO:0034112">
    <property type="term" value="P:positive regulation of homotypic cell-cell adhesion"/>
    <property type="evidence" value="ECO:0007669"/>
    <property type="project" value="Ensembl"/>
</dbReference>
<dbReference type="GO" id="GO:0010759">
    <property type="term" value="P:positive regulation of macrophage chemotaxis"/>
    <property type="evidence" value="ECO:0007669"/>
    <property type="project" value="Ensembl"/>
</dbReference>
<dbReference type="GO" id="GO:0090026">
    <property type="term" value="P:positive regulation of monocyte chemotaxis"/>
    <property type="evidence" value="ECO:0007669"/>
    <property type="project" value="Ensembl"/>
</dbReference>
<dbReference type="GO" id="GO:2000503">
    <property type="term" value="P:positive regulation of natural killer cell chemotaxis"/>
    <property type="evidence" value="ECO:0007669"/>
    <property type="project" value="Ensembl"/>
</dbReference>
<dbReference type="GO" id="GO:0051897">
    <property type="term" value="P:positive regulation of phosphatidylinositol 3-kinase/protein kinase B signal transduction"/>
    <property type="evidence" value="ECO:0007669"/>
    <property type="project" value="Ensembl"/>
</dbReference>
<dbReference type="GO" id="GO:1904894">
    <property type="term" value="P:positive regulation of receptor signaling pathway via STAT"/>
    <property type="evidence" value="ECO:0007669"/>
    <property type="project" value="Ensembl"/>
</dbReference>
<dbReference type="GO" id="GO:0014911">
    <property type="term" value="P:positive regulation of smooth muscle cell migration"/>
    <property type="evidence" value="ECO:0007669"/>
    <property type="project" value="Ensembl"/>
</dbReference>
<dbReference type="GO" id="GO:0048661">
    <property type="term" value="P:positive regulation of smooth muscle cell proliferation"/>
    <property type="evidence" value="ECO:0007669"/>
    <property type="project" value="Ensembl"/>
</dbReference>
<dbReference type="GO" id="GO:0070234">
    <property type="term" value="P:positive regulation of T cell apoptotic process"/>
    <property type="evidence" value="ECO:0007669"/>
    <property type="project" value="Ensembl"/>
</dbReference>
<dbReference type="GO" id="GO:0010820">
    <property type="term" value="P:positive regulation of T cell chemotaxis"/>
    <property type="evidence" value="ECO:0007669"/>
    <property type="project" value="Ensembl"/>
</dbReference>
<dbReference type="GO" id="GO:0042102">
    <property type="term" value="P:positive regulation of T cell proliferation"/>
    <property type="evidence" value="ECO:0007669"/>
    <property type="project" value="Ensembl"/>
</dbReference>
<dbReference type="GO" id="GO:0032008">
    <property type="term" value="P:positive regulation of TOR signaling"/>
    <property type="evidence" value="ECO:0007669"/>
    <property type="project" value="Ensembl"/>
</dbReference>
<dbReference type="GO" id="GO:0050796">
    <property type="term" value="P:regulation of insulin secretion"/>
    <property type="evidence" value="ECO:0000250"/>
    <property type="project" value="UniProtKB"/>
</dbReference>
<dbReference type="GO" id="GO:0009636">
    <property type="term" value="P:response to toxic substance"/>
    <property type="evidence" value="ECO:0007669"/>
    <property type="project" value="Ensembl"/>
</dbReference>
<dbReference type="CDD" id="cd00272">
    <property type="entry name" value="Chemokine_CC"/>
    <property type="match status" value="1"/>
</dbReference>
<dbReference type="FunFam" id="2.40.50.40:FF:000002">
    <property type="entry name" value="C-C motif chemokine"/>
    <property type="match status" value="1"/>
</dbReference>
<dbReference type="Gene3D" id="2.40.50.40">
    <property type="match status" value="1"/>
</dbReference>
<dbReference type="InterPro" id="IPR039809">
    <property type="entry name" value="Chemokine_b/g/d"/>
</dbReference>
<dbReference type="InterPro" id="IPR000827">
    <property type="entry name" value="Chemokine_CC_CS"/>
</dbReference>
<dbReference type="InterPro" id="IPR001811">
    <property type="entry name" value="Chemokine_IL8-like_dom"/>
</dbReference>
<dbReference type="InterPro" id="IPR036048">
    <property type="entry name" value="Interleukin_8-like_sf"/>
</dbReference>
<dbReference type="PANTHER" id="PTHR12015:SF170">
    <property type="entry name" value="C-C MOTIF CHEMOKINE 5"/>
    <property type="match status" value="1"/>
</dbReference>
<dbReference type="PANTHER" id="PTHR12015">
    <property type="entry name" value="SMALL INDUCIBLE CYTOKINE A"/>
    <property type="match status" value="1"/>
</dbReference>
<dbReference type="Pfam" id="PF00048">
    <property type="entry name" value="IL8"/>
    <property type="match status" value="1"/>
</dbReference>
<dbReference type="SMART" id="SM00199">
    <property type="entry name" value="SCY"/>
    <property type="match status" value="1"/>
</dbReference>
<dbReference type="SUPFAM" id="SSF54117">
    <property type="entry name" value="Interleukin 8-like chemokines"/>
    <property type="match status" value="1"/>
</dbReference>
<dbReference type="PROSITE" id="PS00472">
    <property type="entry name" value="SMALL_CYTOKINES_CC"/>
    <property type="match status" value="1"/>
</dbReference>
<gene>
    <name type="primary">CCL5</name>
    <name type="synonym">SCYA5</name>
</gene>
<proteinExistence type="inferred from homology"/>
<keyword id="KW-0145">Chemotaxis</keyword>
<keyword id="KW-0202">Cytokine</keyword>
<keyword id="KW-1015">Disulfide bond</keyword>
<keyword id="KW-0395">Inflammatory response</keyword>
<keyword id="KW-1185">Reference proteome</keyword>
<keyword id="KW-0964">Secreted</keyword>
<keyword id="KW-0732">Signal</keyword>